<protein>
    <recommendedName>
        <fullName evidence="1">GMP synthase [glutamine-hydrolyzing]</fullName>
        <ecNumber evidence="1">6.3.5.2</ecNumber>
    </recommendedName>
    <alternativeName>
        <fullName evidence="1">GMP synthetase</fullName>
    </alternativeName>
    <alternativeName>
        <fullName evidence="1">Glutamine amidotransferase</fullName>
    </alternativeName>
</protein>
<gene>
    <name evidence="1" type="primary">guaA</name>
    <name type="ordered locus">Cpha266_0300</name>
</gene>
<proteinExistence type="inferred from homology"/>
<sequence>MQSVTVLDFGSQYTQLIARRIRELGIYSEILPYNASPETIREHDPKAIILSGGPTSVYGDSALLPDGGVFMLGVPVLGICYGLQAIAKHFGGEVAGSSKQEFGRAKMLVSHNEESESPLFRNIPDSDVWMSHGDKVVRLPEGFRVTASSENSEMCALESYGSKAALKVYGLQFHPEVQHTLYGKQLLSNFLIDIAGIKPDWSPKSFIGHQIEEIRARAGKDKVICGISGGVDSTVAAVLVSQAIGKQLHCVFVDNGLLRKNEAVKVMNFLKPLGLSVTLADASDLFLKRLDKVASPEKKRKIIGRTFIHVFEQHLNEEKYLVQGTLYPDVIESVSVKGPSETIKSHHNVGGLPKRMKLKLIEPLRELFKDEVRAVGRELGIAEDILMRHPFPGPGLAVRVLGSVSRPRLDILREADEIFIEELKTSGLYQHVWQAFSVLLPVQSVGVMGDKRTYENVLALRAVESTDGMTADWAQLPHDFLARVSNRIINEVRGINRVAYDISSKPPATIEWE</sequence>
<comment type="function">
    <text evidence="1">Catalyzes the synthesis of GMP from XMP.</text>
</comment>
<comment type="catalytic activity">
    <reaction evidence="1">
        <text>XMP + L-glutamine + ATP + H2O = GMP + L-glutamate + AMP + diphosphate + 2 H(+)</text>
        <dbReference type="Rhea" id="RHEA:11680"/>
        <dbReference type="ChEBI" id="CHEBI:15377"/>
        <dbReference type="ChEBI" id="CHEBI:15378"/>
        <dbReference type="ChEBI" id="CHEBI:29985"/>
        <dbReference type="ChEBI" id="CHEBI:30616"/>
        <dbReference type="ChEBI" id="CHEBI:33019"/>
        <dbReference type="ChEBI" id="CHEBI:57464"/>
        <dbReference type="ChEBI" id="CHEBI:58115"/>
        <dbReference type="ChEBI" id="CHEBI:58359"/>
        <dbReference type="ChEBI" id="CHEBI:456215"/>
        <dbReference type="EC" id="6.3.5.2"/>
    </reaction>
</comment>
<comment type="pathway">
    <text evidence="1">Purine metabolism; GMP biosynthesis; GMP from XMP (L-Gln route): step 1/1.</text>
</comment>
<comment type="subunit">
    <text evidence="1">Homodimer.</text>
</comment>
<reference key="1">
    <citation type="submission" date="2006-12" db="EMBL/GenBank/DDBJ databases">
        <title>Complete sequence of Chlorobium phaeobacteroides DSM 266.</title>
        <authorList>
            <consortium name="US DOE Joint Genome Institute"/>
            <person name="Copeland A."/>
            <person name="Lucas S."/>
            <person name="Lapidus A."/>
            <person name="Barry K."/>
            <person name="Detter J.C."/>
            <person name="Glavina del Rio T."/>
            <person name="Hammon N."/>
            <person name="Israni S."/>
            <person name="Pitluck S."/>
            <person name="Goltsman E."/>
            <person name="Schmutz J."/>
            <person name="Larimer F."/>
            <person name="Land M."/>
            <person name="Hauser L."/>
            <person name="Mikhailova N."/>
            <person name="Li T."/>
            <person name="Overmann J."/>
            <person name="Bryant D.A."/>
            <person name="Richardson P."/>
        </authorList>
    </citation>
    <scope>NUCLEOTIDE SEQUENCE [LARGE SCALE GENOMIC DNA]</scope>
    <source>
        <strain>DSM 266 / SMG 266 / 2430</strain>
    </source>
</reference>
<keyword id="KW-0067">ATP-binding</keyword>
<keyword id="KW-0315">Glutamine amidotransferase</keyword>
<keyword id="KW-0332">GMP biosynthesis</keyword>
<keyword id="KW-0436">Ligase</keyword>
<keyword id="KW-0547">Nucleotide-binding</keyword>
<keyword id="KW-0658">Purine biosynthesis</keyword>
<keyword id="KW-1185">Reference proteome</keyword>
<evidence type="ECO:0000255" key="1">
    <source>
        <dbReference type="HAMAP-Rule" id="MF_00344"/>
    </source>
</evidence>
<feature type="chain" id="PRO_1000120254" description="GMP synthase [glutamine-hydrolyzing]">
    <location>
        <begin position="1"/>
        <end position="513"/>
    </location>
</feature>
<feature type="domain" description="Glutamine amidotransferase type-1" evidence="1">
    <location>
        <begin position="3"/>
        <end position="200"/>
    </location>
</feature>
<feature type="domain" description="GMPS ATP-PPase" evidence="1">
    <location>
        <begin position="201"/>
        <end position="388"/>
    </location>
</feature>
<feature type="active site" description="Nucleophile" evidence="1">
    <location>
        <position position="80"/>
    </location>
</feature>
<feature type="active site" evidence="1">
    <location>
        <position position="174"/>
    </location>
</feature>
<feature type="active site" evidence="1">
    <location>
        <position position="176"/>
    </location>
</feature>
<feature type="binding site" evidence="1">
    <location>
        <begin position="228"/>
        <end position="234"/>
    </location>
    <ligand>
        <name>ATP</name>
        <dbReference type="ChEBI" id="CHEBI:30616"/>
    </ligand>
</feature>
<dbReference type="EC" id="6.3.5.2" evidence="1"/>
<dbReference type="EMBL" id="CP000492">
    <property type="protein sequence ID" value="ABL64362.1"/>
    <property type="molecule type" value="Genomic_DNA"/>
</dbReference>
<dbReference type="RefSeq" id="WP_011744198.1">
    <property type="nucleotide sequence ID" value="NC_008639.1"/>
</dbReference>
<dbReference type="SMR" id="A1BD85"/>
<dbReference type="STRING" id="290317.Cpha266_0300"/>
<dbReference type="MEROPS" id="C26.957"/>
<dbReference type="KEGG" id="cph:Cpha266_0300"/>
<dbReference type="eggNOG" id="COG0518">
    <property type="taxonomic scope" value="Bacteria"/>
</dbReference>
<dbReference type="eggNOG" id="COG0519">
    <property type="taxonomic scope" value="Bacteria"/>
</dbReference>
<dbReference type="HOGENOM" id="CLU_014340_0_5_10"/>
<dbReference type="OrthoDB" id="9802219at2"/>
<dbReference type="UniPathway" id="UPA00189">
    <property type="reaction ID" value="UER00296"/>
</dbReference>
<dbReference type="Proteomes" id="UP000008701">
    <property type="component" value="Chromosome"/>
</dbReference>
<dbReference type="GO" id="GO:0005829">
    <property type="term" value="C:cytosol"/>
    <property type="evidence" value="ECO:0007669"/>
    <property type="project" value="TreeGrafter"/>
</dbReference>
<dbReference type="GO" id="GO:0005524">
    <property type="term" value="F:ATP binding"/>
    <property type="evidence" value="ECO:0007669"/>
    <property type="project" value="UniProtKB-UniRule"/>
</dbReference>
<dbReference type="GO" id="GO:0003921">
    <property type="term" value="F:GMP synthase activity"/>
    <property type="evidence" value="ECO:0007669"/>
    <property type="project" value="InterPro"/>
</dbReference>
<dbReference type="CDD" id="cd01742">
    <property type="entry name" value="GATase1_GMP_Synthase"/>
    <property type="match status" value="1"/>
</dbReference>
<dbReference type="CDD" id="cd01997">
    <property type="entry name" value="GMP_synthase_C"/>
    <property type="match status" value="1"/>
</dbReference>
<dbReference type="FunFam" id="3.30.300.10:FF:000002">
    <property type="entry name" value="GMP synthase [glutamine-hydrolyzing]"/>
    <property type="match status" value="1"/>
</dbReference>
<dbReference type="FunFam" id="3.40.50.620:FF:000001">
    <property type="entry name" value="GMP synthase [glutamine-hydrolyzing]"/>
    <property type="match status" value="1"/>
</dbReference>
<dbReference type="FunFam" id="3.40.50.880:FF:000001">
    <property type="entry name" value="GMP synthase [glutamine-hydrolyzing]"/>
    <property type="match status" value="1"/>
</dbReference>
<dbReference type="Gene3D" id="3.30.300.10">
    <property type="match status" value="1"/>
</dbReference>
<dbReference type="Gene3D" id="3.40.50.880">
    <property type="match status" value="1"/>
</dbReference>
<dbReference type="Gene3D" id="3.40.50.620">
    <property type="entry name" value="HUPs"/>
    <property type="match status" value="1"/>
</dbReference>
<dbReference type="HAMAP" id="MF_00344">
    <property type="entry name" value="GMP_synthase"/>
    <property type="match status" value="1"/>
</dbReference>
<dbReference type="InterPro" id="IPR029062">
    <property type="entry name" value="Class_I_gatase-like"/>
</dbReference>
<dbReference type="InterPro" id="IPR017926">
    <property type="entry name" value="GATASE"/>
</dbReference>
<dbReference type="InterPro" id="IPR001674">
    <property type="entry name" value="GMP_synth_C"/>
</dbReference>
<dbReference type="InterPro" id="IPR004739">
    <property type="entry name" value="GMP_synth_GATase"/>
</dbReference>
<dbReference type="InterPro" id="IPR022955">
    <property type="entry name" value="GMP_synthase"/>
</dbReference>
<dbReference type="InterPro" id="IPR025777">
    <property type="entry name" value="GMPS_ATP_PPase_dom"/>
</dbReference>
<dbReference type="InterPro" id="IPR022310">
    <property type="entry name" value="NAD/GMP_synthase"/>
</dbReference>
<dbReference type="InterPro" id="IPR014729">
    <property type="entry name" value="Rossmann-like_a/b/a_fold"/>
</dbReference>
<dbReference type="NCBIfam" id="TIGR00884">
    <property type="entry name" value="guaA_Cterm"/>
    <property type="match status" value="1"/>
</dbReference>
<dbReference type="NCBIfam" id="TIGR00888">
    <property type="entry name" value="guaA_Nterm"/>
    <property type="match status" value="1"/>
</dbReference>
<dbReference type="NCBIfam" id="NF000848">
    <property type="entry name" value="PRK00074.1"/>
    <property type="match status" value="1"/>
</dbReference>
<dbReference type="PANTHER" id="PTHR11922:SF2">
    <property type="entry name" value="GMP SYNTHASE [GLUTAMINE-HYDROLYZING]"/>
    <property type="match status" value="1"/>
</dbReference>
<dbReference type="PANTHER" id="PTHR11922">
    <property type="entry name" value="GMP SYNTHASE-RELATED"/>
    <property type="match status" value="1"/>
</dbReference>
<dbReference type="Pfam" id="PF00117">
    <property type="entry name" value="GATase"/>
    <property type="match status" value="1"/>
</dbReference>
<dbReference type="Pfam" id="PF00958">
    <property type="entry name" value="GMP_synt_C"/>
    <property type="match status" value="1"/>
</dbReference>
<dbReference type="Pfam" id="PF02540">
    <property type="entry name" value="NAD_synthase"/>
    <property type="match status" value="1"/>
</dbReference>
<dbReference type="PRINTS" id="PR00097">
    <property type="entry name" value="ANTSNTHASEII"/>
</dbReference>
<dbReference type="PRINTS" id="PR00096">
    <property type="entry name" value="GATASE"/>
</dbReference>
<dbReference type="SUPFAM" id="SSF52402">
    <property type="entry name" value="Adenine nucleotide alpha hydrolases-like"/>
    <property type="match status" value="1"/>
</dbReference>
<dbReference type="SUPFAM" id="SSF52317">
    <property type="entry name" value="Class I glutamine amidotransferase-like"/>
    <property type="match status" value="1"/>
</dbReference>
<dbReference type="SUPFAM" id="SSF54810">
    <property type="entry name" value="GMP synthetase C-terminal dimerisation domain"/>
    <property type="match status" value="1"/>
</dbReference>
<dbReference type="PROSITE" id="PS51273">
    <property type="entry name" value="GATASE_TYPE_1"/>
    <property type="match status" value="1"/>
</dbReference>
<dbReference type="PROSITE" id="PS51553">
    <property type="entry name" value="GMPS_ATP_PPASE"/>
    <property type="match status" value="1"/>
</dbReference>
<accession>A1BD85</accession>
<name>GUAA_CHLPD</name>
<organism>
    <name type="scientific">Chlorobium phaeobacteroides (strain DSM 266 / SMG 266 / 2430)</name>
    <dbReference type="NCBI Taxonomy" id="290317"/>
    <lineage>
        <taxon>Bacteria</taxon>
        <taxon>Pseudomonadati</taxon>
        <taxon>Chlorobiota</taxon>
        <taxon>Chlorobiia</taxon>
        <taxon>Chlorobiales</taxon>
        <taxon>Chlorobiaceae</taxon>
        <taxon>Chlorobium/Pelodictyon group</taxon>
        <taxon>Chlorobium</taxon>
    </lineage>
</organism>